<sequence>MATLPVLPLTDAVLLPGMAIPVTLDPTTQAAVDAARATGDQRLLAVPRLDGEYGPVGVVATIEKVGRLPSGEPAAVVRGLARARIGSGVPGPGAALWVEAAELAEPAPAGRARELAREYRALMTSVLQQRGAWQVIDAIERMTDLSELADSAGYVSWLSLAQKTELLAAPDVTTRLELLVGWVRAHLAEQEVAEQINTDVREGLEKSQREFLLRQQLATIRKELGEDEPEGSADYRARVEAADLPAPVRDAALREVGKLERASDASPEAGWIRTWLDTVLEMPWNTRTEDNTDLVAARAVLDADHAGLTDVKDRILEYLAVRNRRVERNLGVVGGRGSGAVLALAGPPGVGKTSLGESVARALGRRFVRVSLGGVRDEAEIRGHRRTYVGALPGRIVRALREAGSMNPVVLLDEVDKLAVGYSGDPAAALLEVLDPAQNHTFRDHYLEVDLDLSDVLFLATANVVEAIPSPLLDRMELVTLDGYTEDEKVAIARDHLLPRQRERAGLTADEVTISDGVLARIAGEYTREAGVRQLERSLAKIFRKVAVTATTDPAPVHVDTGNLHRYLGRPKFSPESAERTAVPGVATGLAVTGAGGDVLFVEATSMAGEPGLTLTGQLGDVMKESAQIALSYLRSNGRRLGLDPNALAGRRIHLHVPAGAVPKDGPSAGITMVTALASLVSGRPVRPEFGMTGEVTLSGRALPIGGVKQKLLAAHRAGLTEVIIPQRNEPDLDDLPAEVREALTVHTLADVADVLALALRPADLDADSLDGEALATA</sequence>
<name>LON_SALAI</name>
<reference key="1">
    <citation type="submission" date="2007-10" db="EMBL/GenBank/DDBJ databases">
        <title>Complete sequence of Salinispora arenicola CNS-205.</title>
        <authorList>
            <consortium name="US DOE Joint Genome Institute"/>
            <person name="Copeland A."/>
            <person name="Lucas S."/>
            <person name="Lapidus A."/>
            <person name="Barry K."/>
            <person name="Glavina del Rio T."/>
            <person name="Dalin E."/>
            <person name="Tice H."/>
            <person name="Pitluck S."/>
            <person name="Foster B."/>
            <person name="Schmutz J."/>
            <person name="Larimer F."/>
            <person name="Land M."/>
            <person name="Hauser L."/>
            <person name="Kyrpides N."/>
            <person name="Ivanova N."/>
            <person name="Jensen P.R."/>
            <person name="Moore B.S."/>
            <person name="Penn K."/>
            <person name="Jenkins C."/>
            <person name="Udwary D."/>
            <person name="Xiang L."/>
            <person name="Gontang E."/>
            <person name="Richardson P."/>
        </authorList>
    </citation>
    <scope>NUCLEOTIDE SEQUENCE [LARGE SCALE GENOMIC DNA]</scope>
    <source>
        <strain>CNS-205</strain>
    </source>
</reference>
<organism>
    <name type="scientific">Salinispora arenicola (strain CNS-205)</name>
    <dbReference type="NCBI Taxonomy" id="391037"/>
    <lineage>
        <taxon>Bacteria</taxon>
        <taxon>Bacillati</taxon>
        <taxon>Actinomycetota</taxon>
        <taxon>Actinomycetes</taxon>
        <taxon>Micromonosporales</taxon>
        <taxon>Micromonosporaceae</taxon>
        <taxon>Salinispora</taxon>
    </lineage>
</organism>
<gene>
    <name evidence="1" type="primary">lon</name>
    <name type="ordered locus">Sare_2249</name>
</gene>
<evidence type="ECO:0000255" key="1">
    <source>
        <dbReference type="HAMAP-Rule" id="MF_01973"/>
    </source>
</evidence>
<evidence type="ECO:0000255" key="2">
    <source>
        <dbReference type="PROSITE-ProRule" id="PRU01122"/>
    </source>
</evidence>
<evidence type="ECO:0000255" key="3">
    <source>
        <dbReference type="PROSITE-ProRule" id="PRU01123"/>
    </source>
</evidence>
<accession>A8M1E8</accession>
<keyword id="KW-0067">ATP-binding</keyword>
<keyword id="KW-0963">Cytoplasm</keyword>
<keyword id="KW-0378">Hydrolase</keyword>
<keyword id="KW-0547">Nucleotide-binding</keyword>
<keyword id="KW-0645">Protease</keyword>
<keyword id="KW-0720">Serine protease</keyword>
<keyword id="KW-0346">Stress response</keyword>
<feature type="chain" id="PRO_0000396596" description="Lon protease">
    <location>
        <begin position="1"/>
        <end position="778"/>
    </location>
</feature>
<feature type="domain" description="Lon N-terminal" evidence="3">
    <location>
        <begin position="4"/>
        <end position="187"/>
    </location>
</feature>
<feature type="domain" description="Lon proteolytic" evidence="2">
    <location>
        <begin position="581"/>
        <end position="762"/>
    </location>
</feature>
<feature type="active site" evidence="1">
    <location>
        <position position="668"/>
    </location>
</feature>
<feature type="active site" evidence="1">
    <location>
        <position position="711"/>
    </location>
</feature>
<feature type="binding site" evidence="1">
    <location>
        <begin position="346"/>
        <end position="353"/>
    </location>
    <ligand>
        <name>ATP</name>
        <dbReference type="ChEBI" id="CHEBI:30616"/>
    </ligand>
</feature>
<proteinExistence type="inferred from homology"/>
<dbReference type="EC" id="3.4.21.53" evidence="1"/>
<dbReference type="EMBL" id="CP000850">
    <property type="protein sequence ID" value="ABV98109.1"/>
    <property type="molecule type" value="Genomic_DNA"/>
</dbReference>
<dbReference type="SMR" id="A8M1E8"/>
<dbReference type="STRING" id="391037.Sare_2249"/>
<dbReference type="KEGG" id="saq:Sare_2249"/>
<dbReference type="PATRIC" id="fig|391037.6.peg.2278"/>
<dbReference type="eggNOG" id="COG0466">
    <property type="taxonomic scope" value="Bacteria"/>
</dbReference>
<dbReference type="HOGENOM" id="CLU_004109_4_3_11"/>
<dbReference type="OrthoDB" id="9803599at2"/>
<dbReference type="GO" id="GO:0005737">
    <property type="term" value="C:cytoplasm"/>
    <property type="evidence" value="ECO:0007669"/>
    <property type="project" value="UniProtKB-SubCell"/>
</dbReference>
<dbReference type="GO" id="GO:0005524">
    <property type="term" value="F:ATP binding"/>
    <property type="evidence" value="ECO:0007669"/>
    <property type="project" value="UniProtKB-UniRule"/>
</dbReference>
<dbReference type="GO" id="GO:0016887">
    <property type="term" value="F:ATP hydrolysis activity"/>
    <property type="evidence" value="ECO:0007669"/>
    <property type="project" value="UniProtKB-UniRule"/>
</dbReference>
<dbReference type="GO" id="GO:0004176">
    <property type="term" value="F:ATP-dependent peptidase activity"/>
    <property type="evidence" value="ECO:0007669"/>
    <property type="project" value="UniProtKB-UniRule"/>
</dbReference>
<dbReference type="GO" id="GO:0043565">
    <property type="term" value="F:sequence-specific DNA binding"/>
    <property type="evidence" value="ECO:0007669"/>
    <property type="project" value="UniProtKB-UniRule"/>
</dbReference>
<dbReference type="GO" id="GO:0004252">
    <property type="term" value="F:serine-type endopeptidase activity"/>
    <property type="evidence" value="ECO:0007669"/>
    <property type="project" value="UniProtKB-UniRule"/>
</dbReference>
<dbReference type="GO" id="GO:0034605">
    <property type="term" value="P:cellular response to heat"/>
    <property type="evidence" value="ECO:0007669"/>
    <property type="project" value="UniProtKB-UniRule"/>
</dbReference>
<dbReference type="GO" id="GO:0006515">
    <property type="term" value="P:protein quality control for misfolded or incompletely synthesized proteins"/>
    <property type="evidence" value="ECO:0007669"/>
    <property type="project" value="UniProtKB-UniRule"/>
</dbReference>
<dbReference type="CDD" id="cd19500">
    <property type="entry name" value="RecA-like_Lon"/>
    <property type="match status" value="1"/>
</dbReference>
<dbReference type="FunFam" id="3.40.50.300:FF:000021">
    <property type="entry name" value="Lon protease homolog"/>
    <property type="match status" value="1"/>
</dbReference>
<dbReference type="Gene3D" id="1.10.8.60">
    <property type="match status" value="1"/>
</dbReference>
<dbReference type="Gene3D" id="1.20.5.5270">
    <property type="match status" value="1"/>
</dbReference>
<dbReference type="Gene3D" id="1.20.58.1480">
    <property type="match status" value="1"/>
</dbReference>
<dbReference type="Gene3D" id="3.30.230.10">
    <property type="match status" value="1"/>
</dbReference>
<dbReference type="Gene3D" id="2.30.130.40">
    <property type="entry name" value="LON domain-like"/>
    <property type="match status" value="1"/>
</dbReference>
<dbReference type="Gene3D" id="3.40.50.300">
    <property type="entry name" value="P-loop containing nucleotide triphosphate hydrolases"/>
    <property type="match status" value="1"/>
</dbReference>
<dbReference type="HAMAP" id="MF_01973">
    <property type="entry name" value="lon_bact"/>
    <property type="match status" value="1"/>
</dbReference>
<dbReference type="InterPro" id="IPR003593">
    <property type="entry name" value="AAA+_ATPase"/>
</dbReference>
<dbReference type="InterPro" id="IPR003959">
    <property type="entry name" value="ATPase_AAA_core"/>
</dbReference>
<dbReference type="InterPro" id="IPR027543">
    <property type="entry name" value="Lon_bac"/>
</dbReference>
<dbReference type="InterPro" id="IPR004815">
    <property type="entry name" value="Lon_bac/euk-typ"/>
</dbReference>
<dbReference type="InterPro" id="IPR054594">
    <property type="entry name" value="Lon_lid"/>
</dbReference>
<dbReference type="InterPro" id="IPR008269">
    <property type="entry name" value="Lon_proteolytic"/>
</dbReference>
<dbReference type="InterPro" id="IPR027065">
    <property type="entry name" value="Lon_Prtase"/>
</dbReference>
<dbReference type="InterPro" id="IPR003111">
    <property type="entry name" value="Lon_prtase_N"/>
</dbReference>
<dbReference type="InterPro" id="IPR046336">
    <property type="entry name" value="Lon_prtase_N_sf"/>
</dbReference>
<dbReference type="InterPro" id="IPR027417">
    <property type="entry name" value="P-loop_NTPase"/>
</dbReference>
<dbReference type="InterPro" id="IPR008268">
    <property type="entry name" value="Peptidase_S16_AS"/>
</dbReference>
<dbReference type="InterPro" id="IPR015947">
    <property type="entry name" value="PUA-like_sf"/>
</dbReference>
<dbReference type="InterPro" id="IPR020568">
    <property type="entry name" value="Ribosomal_Su5_D2-typ_SF"/>
</dbReference>
<dbReference type="InterPro" id="IPR014721">
    <property type="entry name" value="Ribsml_uS5_D2-typ_fold_subgr"/>
</dbReference>
<dbReference type="NCBIfam" id="TIGR00763">
    <property type="entry name" value="lon"/>
    <property type="match status" value="1"/>
</dbReference>
<dbReference type="PANTHER" id="PTHR10046">
    <property type="entry name" value="ATP DEPENDENT LON PROTEASE FAMILY MEMBER"/>
    <property type="match status" value="1"/>
</dbReference>
<dbReference type="Pfam" id="PF00004">
    <property type="entry name" value="AAA"/>
    <property type="match status" value="1"/>
</dbReference>
<dbReference type="Pfam" id="PF05362">
    <property type="entry name" value="Lon_C"/>
    <property type="match status" value="1"/>
</dbReference>
<dbReference type="Pfam" id="PF22667">
    <property type="entry name" value="Lon_lid"/>
    <property type="match status" value="1"/>
</dbReference>
<dbReference type="Pfam" id="PF02190">
    <property type="entry name" value="LON_substr_bdg"/>
    <property type="match status" value="1"/>
</dbReference>
<dbReference type="PIRSF" id="PIRSF001174">
    <property type="entry name" value="Lon_proteas"/>
    <property type="match status" value="1"/>
</dbReference>
<dbReference type="PRINTS" id="PR00830">
    <property type="entry name" value="ENDOLAPTASE"/>
</dbReference>
<dbReference type="SMART" id="SM00382">
    <property type="entry name" value="AAA"/>
    <property type="match status" value="1"/>
</dbReference>
<dbReference type="SMART" id="SM00464">
    <property type="entry name" value="LON"/>
    <property type="match status" value="1"/>
</dbReference>
<dbReference type="SUPFAM" id="SSF52540">
    <property type="entry name" value="P-loop containing nucleoside triphosphate hydrolases"/>
    <property type="match status" value="1"/>
</dbReference>
<dbReference type="SUPFAM" id="SSF88697">
    <property type="entry name" value="PUA domain-like"/>
    <property type="match status" value="1"/>
</dbReference>
<dbReference type="SUPFAM" id="SSF54211">
    <property type="entry name" value="Ribosomal protein S5 domain 2-like"/>
    <property type="match status" value="1"/>
</dbReference>
<dbReference type="PROSITE" id="PS51787">
    <property type="entry name" value="LON_N"/>
    <property type="match status" value="1"/>
</dbReference>
<dbReference type="PROSITE" id="PS51786">
    <property type="entry name" value="LON_PROTEOLYTIC"/>
    <property type="match status" value="1"/>
</dbReference>
<dbReference type="PROSITE" id="PS01046">
    <property type="entry name" value="LON_SER"/>
    <property type="match status" value="1"/>
</dbReference>
<protein>
    <recommendedName>
        <fullName evidence="1">Lon protease</fullName>
        <ecNumber evidence="1">3.4.21.53</ecNumber>
    </recommendedName>
    <alternativeName>
        <fullName evidence="1">ATP-dependent protease La</fullName>
    </alternativeName>
</protein>
<comment type="function">
    <text evidence="1">ATP-dependent serine protease that mediates the selective degradation of mutant and abnormal proteins as well as certain short-lived regulatory proteins. Required for cellular homeostasis and for survival from DNA damage and developmental changes induced by stress. Degrades polypeptides processively to yield small peptide fragments that are 5 to 10 amino acids long. Binds to DNA in a double-stranded, site-specific manner.</text>
</comment>
<comment type="catalytic activity">
    <reaction evidence="1">
        <text>Hydrolysis of proteins in presence of ATP.</text>
        <dbReference type="EC" id="3.4.21.53"/>
    </reaction>
</comment>
<comment type="subunit">
    <text evidence="1">Homohexamer. Organized in a ring with a central cavity.</text>
</comment>
<comment type="subcellular location">
    <subcellularLocation>
        <location evidence="1">Cytoplasm</location>
    </subcellularLocation>
</comment>
<comment type="induction">
    <text evidence="1">By heat shock.</text>
</comment>
<comment type="similarity">
    <text evidence="1">Belongs to the peptidase S16 family.</text>
</comment>